<name>RL24_VIBC1</name>
<reference key="1">
    <citation type="submission" date="2007-08" db="EMBL/GenBank/DDBJ databases">
        <authorList>
            <consortium name="The Vibrio harveyi Genome Sequencing Project"/>
            <person name="Bassler B."/>
            <person name="Clifton S.W."/>
            <person name="Fulton L."/>
            <person name="Delehaunty K."/>
            <person name="Fronick C."/>
            <person name="Harrison M."/>
            <person name="Markivic C."/>
            <person name="Fulton R."/>
            <person name="Tin-Wollam A.-M."/>
            <person name="Shah N."/>
            <person name="Pepin K."/>
            <person name="Nash W."/>
            <person name="Thiruvilangam P."/>
            <person name="Bhonagiri V."/>
            <person name="Waters C."/>
            <person name="Tu K.C."/>
            <person name="Irgon J."/>
            <person name="Wilson R.K."/>
        </authorList>
    </citation>
    <scope>NUCLEOTIDE SEQUENCE [LARGE SCALE GENOMIC DNA]</scope>
    <source>
        <strain>ATCC BAA-1116 / BB120</strain>
    </source>
</reference>
<organism>
    <name type="scientific">Vibrio campbellii (strain ATCC BAA-1116)</name>
    <dbReference type="NCBI Taxonomy" id="2902295"/>
    <lineage>
        <taxon>Bacteria</taxon>
        <taxon>Pseudomonadati</taxon>
        <taxon>Pseudomonadota</taxon>
        <taxon>Gammaproteobacteria</taxon>
        <taxon>Vibrionales</taxon>
        <taxon>Vibrionaceae</taxon>
        <taxon>Vibrio</taxon>
    </lineage>
</organism>
<dbReference type="EMBL" id="CP000789">
    <property type="protein sequence ID" value="ABU69742.1"/>
    <property type="molecule type" value="Genomic_DNA"/>
</dbReference>
<dbReference type="RefSeq" id="WP_005435084.1">
    <property type="nucleotide sequence ID" value="NC_022269.1"/>
</dbReference>
<dbReference type="SMR" id="A7N0I8"/>
<dbReference type="GeneID" id="83583112"/>
<dbReference type="KEGG" id="vha:VIBHAR_00741"/>
<dbReference type="PATRIC" id="fig|338187.25.peg.1873"/>
<dbReference type="Proteomes" id="UP000008152">
    <property type="component" value="Chromosome I"/>
</dbReference>
<dbReference type="GO" id="GO:1990904">
    <property type="term" value="C:ribonucleoprotein complex"/>
    <property type="evidence" value="ECO:0007669"/>
    <property type="project" value="UniProtKB-KW"/>
</dbReference>
<dbReference type="GO" id="GO:0005840">
    <property type="term" value="C:ribosome"/>
    <property type="evidence" value="ECO:0007669"/>
    <property type="project" value="UniProtKB-KW"/>
</dbReference>
<dbReference type="GO" id="GO:0019843">
    <property type="term" value="F:rRNA binding"/>
    <property type="evidence" value="ECO:0007669"/>
    <property type="project" value="UniProtKB-UniRule"/>
</dbReference>
<dbReference type="GO" id="GO:0003735">
    <property type="term" value="F:structural constituent of ribosome"/>
    <property type="evidence" value="ECO:0007669"/>
    <property type="project" value="InterPro"/>
</dbReference>
<dbReference type="GO" id="GO:0006412">
    <property type="term" value="P:translation"/>
    <property type="evidence" value="ECO:0007669"/>
    <property type="project" value="UniProtKB-UniRule"/>
</dbReference>
<dbReference type="CDD" id="cd06089">
    <property type="entry name" value="KOW_RPL26"/>
    <property type="match status" value="1"/>
</dbReference>
<dbReference type="FunFam" id="2.30.30.30:FF:000004">
    <property type="entry name" value="50S ribosomal protein L24"/>
    <property type="match status" value="1"/>
</dbReference>
<dbReference type="Gene3D" id="2.30.30.30">
    <property type="match status" value="1"/>
</dbReference>
<dbReference type="HAMAP" id="MF_01326_B">
    <property type="entry name" value="Ribosomal_uL24_B"/>
    <property type="match status" value="1"/>
</dbReference>
<dbReference type="InterPro" id="IPR005824">
    <property type="entry name" value="KOW"/>
</dbReference>
<dbReference type="InterPro" id="IPR014722">
    <property type="entry name" value="Rib_uL2_dom2"/>
</dbReference>
<dbReference type="InterPro" id="IPR003256">
    <property type="entry name" value="Ribosomal_uL24"/>
</dbReference>
<dbReference type="InterPro" id="IPR005825">
    <property type="entry name" value="Ribosomal_uL24_CS"/>
</dbReference>
<dbReference type="InterPro" id="IPR041988">
    <property type="entry name" value="Ribosomal_uL24_KOW"/>
</dbReference>
<dbReference type="InterPro" id="IPR008991">
    <property type="entry name" value="Translation_prot_SH3-like_sf"/>
</dbReference>
<dbReference type="NCBIfam" id="TIGR01079">
    <property type="entry name" value="rplX_bact"/>
    <property type="match status" value="1"/>
</dbReference>
<dbReference type="PANTHER" id="PTHR12903">
    <property type="entry name" value="MITOCHONDRIAL RIBOSOMAL PROTEIN L24"/>
    <property type="match status" value="1"/>
</dbReference>
<dbReference type="Pfam" id="PF00467">
    <property type="entry name" value="KOW"/>
    <property type="match status" value="1"/>
</dbReference>
<dbReference type="Pfam" id="PF17136">
    <property type="entry name" value="ribosomal_L24"/>
    <property type="match status" value="1"/>
</dbReference>
<dbReference type="SMART" id="SM00739">
    <property type="entry name" value="KOW"/>
    <property type="match status" value="1"/>
</dbReference>
<dbReference type="SUPFAM" id="SSF50104">
    <property type="entry name" value="Translation proteins SH3-like domain"/>
    <property type="match status" value="1"/>
</dbReference>
<dbReference type="PROSITE" id="PS01108">
    <property type="entry name" value="RIBOSOMAL_L24"/>
    <property type="match status" value="1"/>
</dbReference>
<feature type="chain" id="PRO_1000052335" description="Large ribosomal subunit protein uL24">
    <location>
        <begin position="1"/>
        <end position="105"/>
    </location>
</feature>
<evidence type="ECO:0000255" key="1">
    <source>
        <dbReference type="HAMAP-Rule" id="MF_01326"/>
    </source>
</evidence>
<evidence type="ECO:0000305" key="2"/>
<keyword id="KW-0687">Ribonucleoprotein</keyword>
<keyword id="KW-0689">Ribosomal protein</keyword>
<keyword id="KW-0694">RNA-binding</keyword>
<keyword id="KW-0699">rRNA-binding</keyword>
<proteinExistence type="inferred from homology"/>
<comment type="function">
    <text evidence="1">One of two assembly initiator proteins, it binds directly to the 5'-end of the 23S rRNA, where it nucleates assembly of the 50S subunit.</text>
</comment>
<comment type="function">
    <text evidence="1">One of the proteins that surrounds the polypeptide exit tunnel on the outside of the subunit.</text>
</comment>
<comment type="subunit">
    <text evidence="1">Part of the 50S ribosomal subunit.</text>
</comment>
<comment type="similarity">
    <text evidence="1">Belongs to the universal ribosomal protein uL24 family.</text>
</comment>
<accession>A7N0I8</accession>
<protein>
    <recommendedName>
        <fullName evidence="1">Large ribosomal subunit protein uL24</fullName>
    </recommendedName>
    <alternativeName>
        <fullName evidence="2">50S ribosomal protein L24</fullName>
    </alternativeName>
</protein>
<sequence length="105" mass="11300">MAAKIRRNDEVIVLAGKDKGKKGKVTKVLATGKVIVEGINLVKKHQKPVPALGIQGGIVEQEAAIDVSNVAIFNAATGKADRIGFRFEDGKKVRFFKSNNEIVSN</sequence>
<gene>
    <name evidence="1" type="primary">rplX</name>
    <name type="ordered locus">VIBHAR_00741</name>
</gene>